<accession>C4XXL5</accession>
<feature type="transit peptide" description="Mitochondrion" evidence="2">
    <location>
        <begin position="1"/>
        <end position="55"/>
    </location>
</feature>
<feature type="chain" id="PRO_0000409633" description="Genetic interactor of prohibitins 3, mitochondrial">
    <location>
        <begin position="56"/>
        <end position="619"/>
    </location>
</feature>
<feature type="domain" description="CP-type G" evidence="3">
    <location>
        <begin position="162"/>
        <end position="372"/>
    </location>
</feature>
<reference key="1">
    <citation type="journal article" date="2009" name="Nature">
        <title>Evolution of pathogenicity and sexual reproduction in eight Candida genomes.</title>
        <authorList>
            <person name="Butler G."/>
            <person name="Rasmussen M.D."/>
            <person name="Lin M.F."/>
            <person name="Santos M.A.S."/>
            <person name="Sakthikumar S."/>
            <person name="Munro C.A."/>
            <person name="Rheinbay E."/>
            <person name="Grabherr M."/>
            <person name="Forche A."/>
            <person name="Reedy J.L."/>
            <person name="Agrafioti I."/>
            <person name="Arnaud M.B."/>
            <person name="Bates S."/>
            <person name="Brown A.J.P."/>
            <person name="Brunke S."/>
            <person name="Costanzo M.C."/>
            <person name="Fitzpatrick D.A."/>
            <person name="de Groot P.W.J."/>
            <person name="Harris D."/>
            <person name="Hoyer L.L."/>
            <person name="Hube B."/>
            <person name="Klis F.M."/>
            <person name="Kodira C."/>
            <person name="Lennard N."/>
            <person name="Logue M.E."/>
            <person name="Martin R."/>
            <person name="Neiman A.M."/>
            <person name="Nikolaou E."/>
            <person name="Quail M.A."/>
            <person name="Quinn J."/>
            <person name="Santos M.C."/>
            <person name="Schmitzberger F.F."/>
            <person name="Sherlock G."/>
            <person name="Shah P."/>
            <person name="Silverstein K.A.T."/>
            <person name="Skrzypek M.S."/>
            <person name="Soll D."/>
            <person name="Staggs R."/>
            <person name="Stansfield I."/>
            <person name="Stumpf M.P.H."/>
            <person name="Sudbery P.E."/>
            <person name="Srikantha T."/>
            <person name="Zeng Q."/>
            <person name="Berman J."/>
            <person name="Berriman M."/>
            <person name="Heitman J."/>
            <person name="Gow N.A.R."/>
            <person name="Lorenz M.C."/>
            <person name="Birren B.W."/>
            <person name="Kellis M."/>
            <person name="Cuomo C.A."/>
        </authorList>
    </citation>
    <scope>NUCLEOTIDE SEQUENCE [LARGE SCALE GENOMIC DNA]</scope>
    <source>
        <strain>ATCC 42720</strain>
    </source>
</reference>
<dbReference type="EMBL" id="CH408076">
    <property type="protein sequence ID" value="EEQ36564.1"/>
    <property type="molecule type" value="Genomic_DNA"/>
</dbReference>
<dbReference type="RefSeq" id="XP_002619528.1">
    <property type="nucleotide sequence ID" value="XM_002619482.1"/>
</dbReference>
<dbReference type="FunCoup" id="C4XXL5">
    <property type="interactions" value="74"/>
</dbReference>
<dbReference type="STRING" id="306902.C4XXL5"/>
<dbReference type="GeneID" id="8500151"/>
<dbReference type="KEGG" id="clu:CLUG_00687"/>
<dbReference type="VEuPathDB" id="FungiDB:CLUG_00687"/>
<dbReference type="HOGENOM" id="CLU_025792_0_0_1"/>
<dbReference type="InParanoid" id="C4XXL5"/>
<dbReference type="OMA" id="IIPPFYG"/>
<dbReference type="OrthoDB" id="117480at4891"/>
<dbReference type="Proteomes" id="UP000007703">
    <property type="component" value="Unassembled WGS sequence"/>
</dbReference>
<dbReference type="GO" id="GO:0005739">
    <property type="term" value="C:mitochondrion"/>
    <property type="evidence" value="ECO:0007669"/>
    <property type="project" value="UniProtKB-SubCell"/>
</dbReference>
<dbReference type="GO" id="GO:0005525">
    <property type="term" value="F:GTP binding"/>
    <property type="evidence" value="ECO:0007669"/>
    <property type="project" value="InterPro"/>
</dbReference>
<dbReference type="Gene3D" id="3.40.50.300">
    <property type="entry name" value="P-loop containing nucleotide triphosphate hydrolases"/>
    <property type="match status" value="1"/>
</dbReference>
<dbReference type="InterPro" id="IPR030378">
    <property type="entry name" value="G_CP_dom"/>
</dbReference>
<dbReference type="InterPro" id="IPR050896">
    <property type="entry name" value="Mito_lipid_metab_GTPase"/>
</dbReference>
<dbReference type="InterPro" id="IPR027417">
    <property type="entry name" value="P-loop_NTPase"/>
</dbReference>
<dbReference type="PANTHER" id="PTHR46434">
    <property type="entry name" value="GENETIC INTERACTOR OF PROHIBITINS 3, MITOCHONDRIAL"/>
    <property type="match status" value="1"/>
</dbReference>
<dbReference type="PANTHER" id="PTHR46434:SF1">
    <property type="entry name" value="GENETIC INTERACTOR OF PROHIBITINS 3, MITOCHONDRIAL"/>
    <property type="match status" value="1"/>
</dbReference>
<dbReference type="SUPFAM" id="SSF52540">
    <property type="entry name" value="P-loop containing nucleoside triphosphate hydrolases"/>
    <property type="match status" value="1"/>
</dbReference>
<dbReference type="PROSITE" id="PS51721">
    <property type="entry name" value="G_CP"/>
    <property type="match status" value="1"/>
</dbReference>
<keyword id="KW-0496">Mitochondrion</keyword>
<keyword id="KW-1185">Reference proteome</keyword>
<keyword id="KW-0809">Transit peptide</keyword>
<sequence length="619" mass="69495">MLKAQIQTGLQLLQRAAVSHMRPSSCTSMLMRMRVHLAPRALQSQRSLSSSEFSPLIADAILPKCSSCGVLLQNEDRSKPGFYLAPGSSRDFRKETDVVYEKHLASLEEADRDLLLNGAQGLQVSGQKETPKSQKQPANKVSCIRCRDSHYRSQFPLDQFAVAAVSDVMHSIPAYANLAYVVSATDFPMSINEDVFRHRSPREMQFVVTKNDLFFQKNSVASKYGLQFYQDYFWRMFNVPVENVHCVSGTVDWNTEKLFDSLRDNTYFIGCVNSGKSTLIQSLVHLAHKRRLALPNAKRDRALQKIDNQVISTQQEPKTRQALIKHNRALASAFKKQNGPGASYMPGFTRGNLPFELSRSVTIYDVPGFSSAQTAQLYDFLAPQAIKALHKGQKVYKAGTYKSHYETLKSGQVLTVGGLFFLQAPKNTMFQVKNLISHPHHIFKDMEKAMDVWRSPEIYPALKNVFVVPGTRNNAPTPLVKHIVPSFYGSIDLVLRYLGYVSLKPTGAKDPESGPLVVYLPKEVDAIIRQPITKYISRTLSGRDANGNVLRKENWVQKSVTEVKRYTGKTPFTSRLIPAVGEDASADEAEVMERCVEKIKGHAVAHAQISEETKYANWL</sequence>
<gene>
    <name type="primary">GEP3</name>
    <name type="synonym">FMP48</name>
    <name type="ORF">CLUG_00687</name>
</gene>
<name>GEP3_CLAL4</name>
<organism>
    <name type="scientific">Clavispora lusitaniae (strain ATCC 42720)</name>
    <name type="common">Yeast</name>
    <name type="synonym">Candida lusitaniae</name>
    <dbReference type="NCBI Taxonomy" id="306902"/>
    <lineage>
        <taxon>Eukaryota</taxon>
        <taxon>Fungi</taxon>
        <taxon>Dikarya</taxon>
        <taxon>Ascomycota</taxon>
        <taxon>Saccharomycotina</taxon>
        <taxon>Pichiomycetes</taxon>
        <taxon>Metschnikowiaceae</taxon>
        <taxon>Clavispora</taxon>
    </lineage>
</organism>
<comment type="function">
    <text evidence="1">May be involved in the mitochondrial lipid metabolism.</text>
</comment>
<comment type="subcellular location">
    <subcellularLocation>
        <location evidence="1">Mitochondrion</location>
    </subcellularLocation>
</comment>
<comment type="similarity">
    <text evidence="3">Belongs to the TRAFAC class YlqF/YawG GTPase family. GEP3 subfamily.</text>
</comment>
<protein>
    <recommendedName>
        <fullName>Genetic interactor of prohibitins 3, mitochondrial</fullName>
    </recommendedName>
    <alternativeName>
        <fullName>Found in mitochondrial proteome protein 38</fullName>
    </alternativeName>
</protein>
<evidence type="ECO:0000250" key="1"/>
<evidence type="ECO:0000255" key="2"/>
<evidence type="ECO:0000255" key="3">
    <source>
        <dbReference type="PROSITE-ProRule" id="PRU01058"/>
    </source>
</evidence>
<proteinExistence type="inferred from homology"/>